<sequence length="57" mass="6595">MIQSPTSFLIVLILLWCKLVLSCFREFIIALQQLIQVLLQIINSNLQPRLTLCHSLD</sequence>
<keyword id="KW-0945">Host-virus interaction</keyword>
<keyword id="KW-1090">Inhibition of host innate immune response by virus</keyword>
<keyword id="KW-0922">Interferon antiviral system evasion</keyword>
<keyword id="KW-0732">Signal</keyword>
<keyword id="KW-0899">Viral immunoevasion</keyword>
<organismHost>
    <name type="scientific">Gallus gallus</name>
    <name type="common">Chicken</name>
    <dbReference type="NCBI Taxonomy" id="9031"/>
</organismHost>
<reference key="1">
    <citation type="journal article" date="1991" name="Virology">
        <title>A polycistronic mRNA specified by the coronavirus infectious bronchitis virus.</title>
        <authorList>
            <person name="Liu D.X."/>
            <person name="Cavanagh D."/>
            <person name="Green P."/>
            <person name="Inglis S.C."/>
        </authorList>
    </citation>
    <scope>NUCLEOTIDE SEQUENCE [GENOMIC RNA]</scope>
</reference>
<reference key="2">
    <citation type="journal article" date="1986" name="Nucleic Acids Res.">
        <title>Infectious bronchitis virus RNA D encodes three potential translation products.</title>
        <authorList>
            <person name="Niesters H.G.M."/>
            <person name="Zijderveld A.J."/>
            <person name="Seifert W.F."/>
            <person name="Lenstra J.A."/>
            <person name="Bleumink-Pluym N.M.C."/>
            <person name="Horzinek M.C."/>
            <person name="van der Zeijst B.A.M."/>
        </authorList>
    </citation>
    <scope>NUCLEOTIDE SEQUENCE [GENOMIC RNA]</scope>
</reference>
<reference key="3">
    <citation type="submission" date="2006-06" db="EMBL/GenBank/DDBJ databases">
        <title>Avian infectious bronchitis virus strain M41.</title>
        <authorList>
            <person name="Mondal S.P."/>
            <person name="Buckles E.L."/>
        </authorList>
    </citation>
    <scope>NUCLEOTIDE SEQUENCE [GENOMIC RNA]</scope>
</reference>
<reference key="4">
    <citation type="journal article" date="2006" name="J. Virol. Methods">
        <title>Development and evaluation of a real-time Taqman RT-PCR assay for the detection of infectious bronchitis virus from infected chickens.</title>
        <authorList>
            <person name="Callison S.A."/>
            <person name="Hilt D.A."/>
            <person name="Boynton T.O."/>
            <person name="Sample B.F."/>
            <person name="Robison R."/>
            <person name="Swayne D.E."/>
            <person name="Jackwood M.W."/>
        </authorList>
    </citation>
    <scope>NUCLEOTIDE SEQUENCE [GENOMIC RNA]</scope>
</reference>
<feature type="signal peptide" evidence="2">
    <location>
        <begin position="1"/>
        <end position="22"/>
    </location>
</feature>
<feature type="chain" id="PRO_0000106109" description="Non-structural protein 3a">
    <location>
        <begin position="23"/>
        <end position="57"/>
    </location>
</feature>
<feature type="sequence variant">
    <original>L</original>
    <variation>F</variation>
    <location>
        <position position="14"/>
    </location>
</feature>
<gene>
    <name type="ORF">3a</name>
</gene>
<protein>
    <recommendedName>
        <fullName>Non-structural protein 3a</fullName>
        <shortName>ns3a</shortName>
    </recommendedName>
    <alternativeName>
        <fullName>Accessory protein 3a</fullName>
    </alternativeName>
</protein>
<accession>P05137</accession>
<accession>Q0GNB7</accession>
<accession>Q5I5X8</accession>
<organism>
    <name type="scientific">Avian infectious bronchitis virus (strain M41)</name>
    <name type="common">IBV</name>
    <dbReference type="NCBI Taxonomy" id="11127"/>
    <lineage>
        <taxon>Viruses</taxon>
        <taxon>Riboviria</taxon>
        <taxon>Orthornavirae</taxon>
        <taxon>Pisuviricota</taxon>
        <taxon>Pisoniviricetes</taxon>
        <taxon>Nidovirales</taxon>
        <taxon>Cornidovirineae</taxon>
        <taxon>Coronaviridae</taxon>
        <taxon>Orthocoronavirinae</taxon>
        <taxon>Gammacoronavirus</taxon>
        <taxon>Igacovirus</taxon>
        <taxon>Avian coronavirus</taxon>
    </lineage>
</organism>
<evidence type="ECO:0000250" key="1">
    <source>
        <dbReference type="UniProtKB" id="P30237"/>
    </source>
</evidence>
<evidence type="ECO:0000255" key="2"/>
<dbReference type="EMBL" id="X59542">
    <property type="protein sequence ID" value="CAA42115.1"/>
    <property type="molecule type" value="Genomic_RNA"/>
</dbReference>
<dbReference type="EMBL" id="X03723">
    <property type="protein sequence ID" value="CAA27358.1"/>
    <property type="molecule type" value="Genomic_RNA"/>
</dbReference>
<dbReference type="EMBL" id="DQ834384">
    <property type="protein sequence ID" value="ABI26424.1"/>
    <property type="molecule type" value="Genomic_RNA"/>
</dbReference>
<dbReference type="EMBL" id="AY851295">
    <property type="protein sequence ID" value="AAW33787.1"/>
    <property type="molecule type" value="Genomic_RNA"/>
</dbReference>
<dbReference type="PIR" id="A23771">
    <property type="entry name" value="A23771"/>
</dbReference>
<dbReference type="SMR" id="P05137"/>
<dbReference type="Proteomes" id="UP000007642">
    <property type="component" value="Genome"/>
</dbReference>
<dbReference type="Proteomes" id="UP000096468">
    <property type="component" value="Genome"/>
</dbReference>
<dbReference type="GO" id="GO:0052170">
    <property type="term" value="P:symbiont-mediated suppression of host innate immune response"/>
    <property type="evidence" value="ECO:0007669"/>
    <property type="project" value="UniProtKB-KW"/>
</dbReference>
<dbReference type="InterPro" id="IPR005214">
    <property type="entry name" value="IBV_3A"/>
</dbReference>
<dbReference type="Pfam" id="PF03617">
    <property type="entry name" value="IBV_3A"/>
    <property type="match status" value="1"/>
</dbReference>
<name>NS3A_IBVM</name>
<proteinExistence type="inferred from homology"/>
<comment type="function">
    <text evidence="1">Involved in resistance to IFN.</text>
</comment>